<organism>
    <name type="scientific">Borreliella burgdorferi (strain ZS7)</name>
    <name type="common">Borrelia burgdorferi</name>
    <dbReference type="NCBI Taxonomy" id="445985"/>
    <lineage>
        <taxon>Bacteria</taxon>
        <taxon>Pseudomonadati</taxon>
        <taxon>Spirochaetota</taxon>
        <taxon>Spirochaetia</taxon>
        <taxon>Spirochaetales</taxon>
        <taxon>Borreliaceae</taxon>
        <taxon>Borreliella</taxon>
    </lineage>
</organism>
<proteinExistence type="inferred from homology"/>
<reference key="1">
    <citation type="journal article" date="2011" name="J. Bacteriol.">
        <title>Whole-genome sequences of thirteen isolates of Borrelia burgdorferi.</title>
        <authorList>
            <person name="Schutzer S.E."/>
            <person name="Fraser-Liggett C.M."/>
            <person name="Casjens S.R."/>
            <person name="Qiu W.G."/>
            <person name="Dunn J.J."/>
            <person name="Mongodin E.F."/>
            <person name="Luft B.J."/>
        </authorList>
    </citation>
    <scope>NUCLEOTIDE SEQUENCE [LARGE SCALE GENOMIC DNA]</scope>
    <source>
        <strain>ZS7</strain>
    </source>
</reference>
<gene>
    <name evidence="1" type="primary">rsmA</name>
    <name evidence="1" type="synonym">ksgA</name>
    <name type="ordered locus">BbuZS7_0603</name>
</gene>
<keyword id="KW-0963">Cytoplasm</keyword>
<keyword id="KW-0489">Methyltransferase</keyword>
<keyword id="KW-0694">RNA-binding</keyword>
<keyword id="KW-0698">rRNA processing</keyword>
<keyword id="KW-0949">S-adenosyl-L-methionine</keyword>
<keyword id="KW-0808">Transferase</keyword>
<evidence type="ECO:0000255" key="1">
    <source>
        <dbReference type="HAMAP-Rule" id="MF_00607"/>
    </source>
</evidence>
<feature type="chain" id="PRO_1000130247" description="Ribosomal RNA small subunit methyltransferase A">
    <location>
        <begin position="1"/>
        <end position="281"/>
    </location>
</feature>
<feature type="binding site" evidence="1">
    <location>
        <position position="36"/>
    </location>
    <ligand>
        <name>S-adenosyl-L-methionine</name>
        <dbReference type="ChEBI" id="CHEBI:59789"/>
    </ligand>
</feature>
<feature type="binding site" evidence="1">
    <location>
        <position position="38"/>
    </location>
    <ligand>
        <name>S-adenosyl-L-methionine</name>
        <dbReference type="ChEBI" id="CHEBI:59789"/>
    </ligand>
</feature>
<feature type="binding site" evidence="1">
    <location>
        <position position="63"/>
    </location>
    <ligand>
        <name>S-adenosyl-L-methionine</name>
        <dbReference type="ChEBI" id="CHEBI:59789"/>
    </ligand>
</feature>
<feature type="binding site" evidence="1">
    <location>
        <position position="84"/>
    </location>
    <ligand>
        <name>S-adenosyl-L-methionine</name>
        <dbReference type="ChEBI" id="CHEBI:59789"/>
    </ligand>
</feature>
<feature type="binding site" evidence="1">
    <location>
        <position position="109"/>
    </location>
    <ligand>
        <name>S-adenosyl-L-methionine</name>
        <dbReference type="ChEBI" id="CHEBI:59789"/>
    </ligand>
</feature>
<feature type="binding site" evidence="1">
    <location>
        <position position="127"/>
    </location>
    <ligand>
        <name>S-adenosyl-L-methionine</name>
        <dbReference type="ChEBI" id="CHEBI:59789"/>
    </ligand>
</feature>
<accession>B7J2F3</accession>
<sequence>MILSLLSMNINYNSITSIKQTLKERKIAPRKLWGQNYLINESIRQKIIESLDIKENEKIWEIGPGLGAMTEILLKKTNLLTAFEIDLKYSEILNEKFGKLKNFKLIKGDFLKKYKNENQNIDKIFSNLPYNIASKVISKLIEENFLKEMVFTVQKELADRITAKINSKNYSSFTVLVQSHFKVIKILDIGENNFYPAPKVKSTTLKLIPKKNNIKNFKEFNKLVRTVFSNRRKKLKNTIINFITNKATLRENFLKEYLDKRPENISVEEFIQISNTLNAYH</sequence>
<name>RSMA_BORBZ</name>
<protein>
    <recommendedName>
        <fullName evidence="1">Ribosomal RNA small subunit methyltransferase A</fullName>
        <ecNumber evidence="1">2.1.1.182</ecNumber>
    </recommendedName>
    <alternativeName>
        <fullName evidence="1">16S rRNA (adenine(1518)-N(6)/adenine(1519)-N(6))-dimethyltransferase</fullName>
    </alternativeName>
    <alternativeName>
        <fullName evidence="1">16S rRNA dimethyladenosine transferase</fullName>
    </alternativeName>
    <alternativeName>
        <fullName evidence="1">16S rRNA dimethylase</fullName>
    </alternativeName>
    <alternativeName>
        <fullName evidence="1">S-adenosylmethionine-6-N', N'-adenosyl(rRNA) dimethyltransferase</fullName>
    </alternativeName>
</protein>
<comment type="function">
    <text evidence="1">Specifically dimethylates two adjacent adenosines (A1518 and A1519) in the loop of a conserved hairpin near the 3'-end of 16S rRNA in the 30S particle. May play a critical role in biogenesis of 30S subunits.</text>
</comment>
<comment type="catalytic activity">
    <reaction evidence="1">
        <text>adenosine(1518)/adenosine(1519) in 16S rRNA + 4 S-adenosyl-L-methionine = N(6)-dimethyladenosine(1518)/N(6)-dimethyladenosine(1519) in 16S rRNA + 4 S-adenosyl-L-homocysteine + 4 H(+)</text>
        <dbReference type="Rhea" id="RHEA:19609"/>
        <dbReference type="Rhea" id="RHEA-COMP:10232"/>
        <dbReference type="Rhea" id="RHEA-COMP:10233"/>
        <dbReference type="ChEBI" id="CHEBI:15378"/>
        <dbReference type="ChEBI" id="CHEBI:57856"/>
        <dbReference type="ChEBI" id="CHEBI:59789"/>
        <dbReference type="ChEBI" id="CHEBI:74411"/>
        <dbReference type="ChEBI" id="CHEBI:74493"/>
        <dbReference type="EC" id="2.1.1.182"/>
    </reaction>
</comment>
<comment type="subcellular location">
    <subcellularLocation>
        <location evidence="1">Cytoplasm</location>
    </subcellularLocation>
</comment>
<comment type="similarity">
    <text evidence="1">Belongs to the class I-like SAM-binding methyltransferase superfamily. rRNA adenine N(6)-methyltransferase family. RsmA subfamily.</text>
</comment>
<dbReference type="EC" id="2.1.1.182" evidence="1"/>
<dbReference type="EMBL" id="CP001205">
    <property type="protein sequence ID" value="ACK74660.1"/>
    <property type="molecule type" value="Genomic_DNA"/>
</dbReference>
<dbReference type="RefSeq" id="WP_002656878.1">
    <property type="nucleotide sequence ID" value="NC_011728.1"/>
</dbReference>
<dbReference type="SMR" id="B7J2F3"/>
<dbReference type="GeneID" id="56568023"/>
<dbReference type="KEGG" id="bbz:BbuZS7_0603"/>
<dbReference type="HOGENOM" id="CLU_041220_0_1_12"/>
<dbReference type="Proteomes" id="UP000006901">
    <property type="component" value="Chromosome"/>
</dbReference>
<dbReference type="GO" id="GO:0005829">
    <property type="term" value="C:cytosol"/>
    <property type="evidence" value="ECO:0007669"/>
    <property type="project" value="TreeGrafter"/>
</dbReference>
<dbReference type="GO" id="GO:0052908">
    <property type="term" value="F:16S rRNA (adenine(1518)-N(6)/adenine(1519)-N(6))-dimethyltransferase activity"/>
    <property type="evidence" value="ECO:0007669"/>
    <property type="project" value="UniProtKB-EC"/>
</dbReference>
<dbReference type="GO" id="GO:0003723">
    <property type="term" value="F:RNA binding"/>
    <property type="evidence" value="ECO:0007669"/>
    <property type="project" value="UniProtKB-KW"/>
</dbReference>
<dbReference type="CDD" id="cd02440">
    <property type="entry name" value="AdoMet_MTases"/>
    <property type="match status" value="1"/>
</dbReference>
<dbReference type="Gene3D" id="1.10.8.100">
    <property type="entry name" value="Ribosomal RNA adenine dimethylase-like, domain 2"/>
    <property type="match status" value="1"/>
</dbReference>
<dbReference type="Gene3D" id="3.40.50.150">
    <property type="entry name" value="Vaccinia Virus protein VP39"/>
    <property type="match status" value="1"/>
</dbReference>
<dbReference type="HAMAP" id="MF_00607">
    <property type="entry name" value="16SrRNA_methyltr_A"/>
    <property type="match status" value="1"/>
</dbReference>
<dbReference type="InterPro" id="IPR001737">
    <property type="entry name" value="KsgA/Erm"/>
</dbReference>
<dbReference type="InterPro" id="IPR023165">
    <property type="entry name" value="rRNA_Ade_diMease-like_C"/>
</dbReference>
<dbReference type="InterPro" id="IPR020596">
    <property type="entry name" value="rRNA_Ade_Mease_Trfase_CS"/>
</dbReference>
<dbReference type="InterPro" id="IPR020598">
    <property type="entry name" value="rRNA_Ade_methylase_Trfase_N"/>
</dbReference>
<dbReference type="InterPro" id="IPR011530">
    <property type="entry name" value="rRNA_adenine_dimethylase"/>
</dbReference>
<dbReference type="InterPro" id="IPR029063">
    <property type="entry name" value="SAM-dependent_MTases_sf"/>
</dbReference>
<dbReference type="NCBIfam" id="TIGR00755">
    <property type="entry name" value="ksgA"/>
    <property type="match status" value="1"/>
</dbReference>
<dbReference type="PANTHER" id="PTHR11727">
    <property type="entry name" value="DIMETHYLADENOSINE TRANSFERASE"/>
    <property type="match status" value="1"/>
</dbReference>
<dbReference type="PANTHER" id="PTHR11727:SF7">
    <property type="entry name" value="DIMETHYLADENOSINE TRANSFERASE-RELATED"/>
    <property type="match status" value="1"/>
</dbReference>
<dbReference type="Pfam" id="PF00398">
    <property type="entry name" value="RrnaAD"/>
    <property type="match status" value="1"/>
</dbReference>
<dbReference type="SMART" id="SM00650">
    <property type="entry name" value="rADc"/>
    <property type="match status" value="1"/>
</dbReference>
<dbReference type="SUPFAM" id="SSF53335">
    <property type="entry name" value="S-adenosyl-L-methionine-dependent methyltransferases"/>
    <property type="match status" value="1"/>
</dbReference>
<dbReference type="PROSITE" id="PS01131">
    <property type="entry name" value="RRNA_A_DIMETH"/>
    <property type="match status" value="1"/>
</dbReference>
<dbReference type="PROSITE" id="PS51689">
    <property type="entry name" value="SAM_RNA_A_N6_MT"/>
    <property type="match status" value="1"/>
</dbReference>